<comment type="function">
    <text evidence="4">Granulocyte orphan receptor that acts as an trigger efficient phagocytosis of attached particles.</text>
</comment>
<comment type="subunit">
    <text evidence="4">Interacts through its phosphorylated ITAM domain with the SH2 domain-containing cytoplasmic proteins involved in signaling processes during phagocytosis.</text>
</comment>
<comment type="subcellular location">
    <subcellularLocation>
        <location>Membrane</location>
        <topology>Single-pass type I membrane protein</topology>
    </subcellularLocation>
</comment>
<comment type="tissue specificity">
    <text evidence="3">Granulocytes.</text>
</comment>
<comment type="PTM">
    <text evidence="3">N-glycosylated.</text>
</comment>
<comment type="PTM">
    <text evidence="4">The cytoplasmic ITAM-like sequence becomes tyrosine phosphorylated by SRC family PTKs upon ligand-mediated receptor clustering and allows to initiate phagocytosis of bound ligand.</text>
</comment>
<comment type="miscellaneous">
    <text evidence="6">To study the function of the orphan receptor CEACAM4 chimeric proteins containing the extracellular bacteria-binding domain of CEACAM3 and the transmembrane and cytoplasmic part of CEACAM4 has been used.</text>
</comment>
<comment type="similarity">
    <text evidence="5">Belongs to the immunoglobulin superfamily. CEA family.</text>
</comment>
<keyword id="KW-0325">Glycoprotein</keyword>
<keyword id="KW-0393">Immunoglobulin domain</keyword>
<keyword id="KW-0472">Membrane</keyword>
<keyword id="KW-1267">Proteomics identification</keyword>
<keyword id="KW-1185">Reference proteome</keyword>
<keyword id="KW-0732">Signal</keyword>
<keyword id="KW-0812">Transmembrane</keyword>
<keyword id="KW-1133">Transmembrane helix</keyword>
<gene>
    <name evidence="7" type="primary">CEACAM4</name>
    <name type="synonym">CGM7</name>
</gene>
<feature type="signal peptide" evidence="1">
    <location>
        <begin position="1"/>
        <end position="35"/>
    </location>
</feature>
<feature type="chain" id="PRO_0000316847" description="Cell adhesion molecule CEACAM4">
    <location>
        <begin position="36"/>
        <end position="244"/>
    </location>
</feature>
<feature type="topological domain" description="Extracellular" evidence="1">
    <location>
        <begin position="36"/>
        <end position="155"/>
    </location>
</feature>
<feature type="transmembrane region" description="Helical" evidence="1">
    <location>
        <begin position="156"/>
        <end position="176"/>
    </location>
</feature>
<feature type="topological domain" description="Cytoplasmic" evidence="1">
    <location>
        <begin position="177"/>
        <end position="244"/>
    </location>
</feature>
<feature type="domain" description="Ig-like V-type">
    <location>
        <begin position="36"/>
        <end position="139"/>
    </location>
</feature>
<feature type="region of interest" description="Disordered" evidence="2">
    <location>
        <begin position="186"/>
        <end position="215"/>
    </location>
</feature>
<feature type="short sequence motif" description="ITAM" evidence="5">
    <location>
        <begin position="222"/>
        <end position="236"/>
    </location>
</feature>
<feature type="glycosylation site" description="N-linked (GlcNAc...) asparagine" evidence="1">
    <location>
        <position position="57"/>
    </location>
</feature>
<feature type="glycosylation site" description="N-linked (GlcNAc...) asparagine" evidence="1">
    <location>
        <position position="104"/>
    </location>
</feature>
<feature type="glycosylation site" description="N-linked (GlcNAc...) asparagine" evidence="1">
    <location>
        <position position="111"/>
    </location>
</feature>
<feature type="glycosylation site" description="N-linked (GlcNAc...) asparagine" evidence="1">
    <location>
        <position position="126"/>
    </location>
</feature>
<feature type="sequence variant" id="VAR_038404" description="In dbSNP:rs1126454." evidence="3">
    <original>H</original>
    <variation>D</variation>
    <location>
        <position position="29"/>
    </location>
</feature>
<feature type="sequence variant" id="VAR_038405" description="In dbSNP:rs3848568.">
    <original>K</original>
    <variation>R</variation>
    <location>
        <position position="69"/>
    </location>
</feature>
<feature type="mutagenesis site" description="No internalization of bacteria; when associated with F-233." evidence="4">
    <original>Y</original>
    <variation>F</variation>
    <location>
        <position position="222"/>
    </location>
</feature>
<feature type="mutagenesis site" description="No internalization of bacteria; when associated with F-222." evidence="4">
    <original>Y</original>
    <variation>F</variation>
    <location>
        <position position="233"/>
    </location>
</feature>
<feature type="sequence conflict" description="In Ref. 1; BAA14320." evidence="5" ref="1">
    <original>T</original>
    <variation>Q</variation>
    <location>
        <position position="100"/>
    </location>
</feature>
<feature type="sequence conflict" description="In Ref. 1; BAA14320." evidence="5" ref="1">
    <original>EEL</original>
    <variation>VEF</variation>
    <location>
        <begin position="223"/>
        <end position="225"/>
    </location>
</feature>
<proteinExistence type="evidence at protein level"/>
<reference key="1">
    <citation type="journal article" date="1991" name="J. Biol. Chem.">
        <title>Molecular cloning of nonspecific cross-reacting antigens in human granulocytes.</title>
        <authorList>
            <person name="Kuroki M."/>
            <person name="Arakawa F."/>
            <person name="Matsuo Y."/>
            <person name="Oikawa S."/>
            <person name="Misumi Y."/>
            <person name="Nakazato H."/>
            <person name="Matsuoka Y."/>
        </authorList>
    </citation>
    <scope>NUCLEOTIDE SEQUENCE [MRNA]</scope>
    <scope>GLYCOSYLATION</scope>
    <scope>TISSUE SPECIFICITY</scope>
    <scope>VARIANT ASP-29</scope>
</reference>
<reference key="2">
    <citation type="journal article" date="2004" name="Nature">
        <title>The DNA sequence and biology of human chromosome 19.</title>
        <authorList>
            <person name="Grimwood J."/>
            <person name="Gordon L.A."/>
            <person name="Olsen A.S."/>
            <person name="Terry A."/>
            <person name="Schmutz J."/>
            <person name="Lamerdin J.E."/>
            <person name="Hellsten U."/>
            <person name="Goodstein D."/>
            <person name="Couronne O."/>
            <person name="Tran-Gyamfi M."/>
            <person name="Aerts A."/>
            <person name="Altherr M."/>
            <person name="Ashworth L."/>
            <person name="Bajorek E."/>
            <person name="Black S."/>
            <person name="Branscomb E."/>
            <person name="Caenepeel S."/>
            <person name="Carrano A.V."/>
            <person name="Caoile C."/>
            <person name="Chan Y.M."/>
            <person name="Christensen M."/>
            <person name="Cleland C.A."/>
            <person name="Copeland A."/>
            <person name="Dalin E."/>
            <person name="Dehal P."/>
            <person name="Denys M."/>
            <person name="Detter J.C."/>
            <person name="Escobar J."/>
            <person name="Flowers D."/>
            <person name="Fotopulos D."/>
            <person name="Garcia C."/>
            <person name="Georgescu A.M."/>
            <person name="Glavina T."/>
            <person name="Gomez M."/>
            <person name="Gonzales E."/>
            <person name="Groza M."/>
            <person name="Hammon N."/>
            <person name="Hawkins T."/>
            <person name="Haydu L."/>
            <person name="Ho I."/>
            <person name="Huang W."/>
            <person name="Israni S."/>
            <person name="Jett J."/>
            <person name="Kadner K."/>
            <person name="Kimball H."/>
            <person name="Kobayashi A."/>
            <person name="Larionov V."/>
            <person name="Leem S.-H."/>
            <person name="Lopez F."/>
            <person name="Lou Y."/>
            <person name="Lowry S."/>
            <person name="Malfatti S."/>
            <person name="Martinez D."/>
            <person name="McCready P.M."/>
            <person name="Medina C."/>
            <person name="Morgan J."/>
            <person name="Nelson K."/>
            <person name="Nolan M."/>
            <person name="Ovcharenko I."/>
            <person name="Pitluck S."/>
            <person name="Pollard M."/>
            <person name="Popkie A.P."/>
            <person name="Predki P."/>
            <person name="Quan G."/>
            <person name="Ramirez L."/>
            <person name="Rash S."/>
            <person name="Retterer J."/>
            <person name="Rodriguez A."/>
            <person name="Rogers S."/>
            <person name="Salamov A."/>
            <person name="Salazar A."/>
            <person name="She X."/>
            <person name="Smith D."/>
            <person name="Slezak T."/>
            <person name="Solovyev V."/>
            <person name="Thayer N."/>
            <person name="Tice H."/>
            <person name="Tsai M."/>
            <person name="Ustaszewska A."/>
            <person name="Vo N."/>
            <person name="Wagner M."/>
            <person name="Wheeler J."/>
            <person name="Wu K."/>
            <person name="Xie G."/>
            <person name="Yang J."/>
            <person name="Dubchak I."/>
            <person name="Furey T.S."/>
            <person name="DeJong P."/>
            <person name="Dickson M."/>
            <person name="Gordon D."/>
            <person name="Eichler E.E."/>
            <person name="Pennacchio L.A."/>
            <person name="Richardson P."/>
            <person name="Stubbs L."/>
            <person name="Rokhsar D.S."/>
            <person name="Myers R.M."/>
            <person name="Rubin E.M."/>
            <person name="Lucas S.M."/>
        </authorList>
    </citation>
    <scope>NUCLEOTIDE SEQUENCE [LARGE SCALE GENOMIC DNA]</scope>
</reference>
<reference key="3">
    <citation type="submission" date="2005-07" db="EMBL/GenBank/DDBJ databases">
        <authorList>
            <person name="Mural R.J."/>
            <person name="Istrail S."/>
            <person name="Sutton G.G."/>
            <person name="Florea L."/>
            <person name="Halpern A.L."/>
            <person name="Mobarry C.M."/>
            <person name="Lippert R."/>
            <person name="Walenz B."/>
            <person name="Shatkay H."/>
            <person name="Dew I."/>
            <person name="Miller J.R."/>
            <person name="Flanigan M.J."/>
            <person name="Edwards N.J."/>
            <person name="Bolanos R."/>
            <person name="Fasulo D."/>
            <person name="Halldorsson B.V."/>
            <person name="Hannenhalli S."/>
            <person name="Turner R."/>
            <person name="Yooseph S."/>
            <person name="Lu F."/>
            <person name="Nusskern D.R."/>
            <person name="Shue B.C."/>
            <person name="Zheng X.H."/>
            <person name="Zhong F."/>
            <person name="Delcher A.L."/>
            <person name="Huson D.H."/>
            <person name="Kravitz S.A."/>
            <person name="Mouchard L."/>
            <person name="Reinert K."/>
            <person name="Remington K.A."/>
            <person name="Clark A.G."/>
            <person name="Waterman M.S."/>
            <person name="Eichler E.E."/>
            <person name="Adams M.D."/>
            <person name="Hunkapiller M.W."/>
            <person name="Myers E.W."/>
            <person name="Venter J.C."/>
        </authorList>
    </citation>
    <scope>NUCLEOTIDE SEQUENCE [LARGE SCALE GENOMIC DNA]</scope>
</reference>
<reference key="4">
    <citation type="journal article" date="2015" name="J. Leukoc. Biol.">
        <title>The granulocyte orphan receptor CEACAM4 is able to trigger phagocytosis of bacteria.</title>
        <authorList>
            <person name="Delgado Tascon J."/>
            <person name="Adrian J."/>
            <person name="Kopp K."/>
            <person name="Scholz P."/>
            <person name="Tschan M.P."/>
            <person name="Kuespert K."/>
            <person name="Hauck C.R."/>
        </authorList>
    </citation>
    <scope>FUNCTION</scope>
    <scope>PHOSPHORYLATION</scope>
    <scope>MUTAGENESIS OF TYR-222 AND TYR-233</scope>
</reference>
<accession>O75871</accession>
<accession>Q03715</accession>
<accession>Q7LDZ7</accession>
<protein>
    <recommendedName>
        <fullName evidence="5">Cell adhesion molecule CEACAM4</fullName>
    </recommendedName>
    <alternativeName>
        <fullName>Carcinoembryonic antigen CGM7</fullName>
    </alternativeName>
    <alternativeName>
        <fullName>Carcinoembryonic antigen-related cell adhesion molecule 4</fullName>
        <shortName evidence="7">CEA cell adhesion molecule 4</shortName>
    </alternativeName>
    <alternativeName>
        <fullName>Non-specific cross-reacting antigen W236</fullName>
    </alternativeName>
</protein>
<name>CEAM4_HUMAN</name>
<dbReference type="EMBL" id="D90276">
    <property type="protein sequence ID" value="BAA14320.1"/>
    <property type="molecule type" value="mRNA"/>
</dbReference>
<dbReference type="EMBL" id="AC005794">
    <property type="protein sequence ID" value="AAC62829.1"/>
    <property type="molecule type" value="Genomic_DNA"/>
</dbReference>
<dbReference type="EMBL" id="AC005955">
    <property type="protein sequence ID" value="AAC72273.1"/>
    <property type="molecule type" value="Genomic_DNA"/>
</dbReference>
<dbReference type="EMBL" id="CH471126">
    <property type="protein sequence ID" value="EAW57055.1"/>
    <property type="molecule type" value="Genomic_DNA"/>
</dbReference>
<dbReference type="CCDS" id="CCDS33033.1"/>
<dbReference type="PIR" id="A40428">
    <property type="entry name" value="A40428"/>
</dbReference>
<dbReference type="RefSeq" id="NP_001808.2">
    <property type="nucleotide sequence ID" value="NM_001817.4"/>
</dbReference>
<dbReference type="SMR" id="O75871"/>
<dbReference type="FunCoup" id="O75871">
    <property type="interactions" value="290"/>
</dbReference>
<dbReference type="STRING" id="9606.ENSP00000221954"/>
<dbReference type="GlyCosmos" id="O75871">
    <property type="glycosylation" value="4 sites, No reported glycans"/>
</dbReference>
<dbReference type="GlyGen" id="O75871">
    <property type="glycosylation" value="5 sites"/>
</dbReference>
<dbReference type="iPTMnet" id="O75871"/>
<dbReference type="PhosphoSitePlus" id="O75871"/>
<dbReference type="BioMuta" id="CEACAM4"/>
<dbReference type="MassIVE" id="O75871"/>
<dbReference type="PaxDb" id="9606-ENSP00000221954"/>
<dbReference type="PeptideAtlas" id="O75871"/>
<dbReference type="ProteomicsDB" id="50233"/>
<dbReference type="Antibodypedia" id="2296">
    <property type="antibodies" value="97 antibodies from 20 providers"/>
</dbReference>
<dbReference type="DNASU" id="1089"/>
<dbReference type="Ensembl" id="ENST00000221954.7">
    <property type="protein sequence ID" value="ENSP00000221954.2"/>
    <property type="gene ID" value="ENSG00000105352.11"/>
</dbReference>
<dbReference type="Ensembl" id="ENST00000616476.1">
    <property type="protein sequence ID" value="ENSP00000481247.1"/>
    <property type="gene ID" value="ENSG00000274131.3"/>
</dbReference>
<dbReference type="GeneID" id="1089"/>
<dbReference type="KEGG" id="hsa:1089"/>
<dbReference type="MANE-Select" id="ENST00000221954.7">
    <property type="protein sequence ID" value="ENSP00000221954.2"/>
    <property type="RefSeq nucleotide sequence ID" value="NM_001817.4"/>
    <property type="RefSeq protein sequence ID" value="NP_001808.2"/>
</dbReference>
<dbReference type="UCSC" id="uc002orh.1">
    <property type="organism name" value="human"/>
</dbReference>
<dbReference type="AGR" id="HGNC:1816"/>
<dbReference type="CTD" id="1089"/>
<dbReference type="DisGeNET" id="1089"/>
<dbReference type="GeneCards" id="CEACAM4"/>
<dbReference type="HGNC" id="HGNC:1816">
    <property type="gene designation" value="CEACAM4"/>
</dbReference>
<dbReference type="HPA" id="ENSG00000105352">
    <property type="expression patterns" value="Tissue enriched (lymphoid)"/>
</dbReference>
<dbReference type="MIM" id="619159">
    <property type="type" value="gene"/>
</dbReference>
<dbReference type="neXtProt" id="NX_O75871"/>
<dbReference type="OpenTargets" id="ENSG00000105352"/>
<dbReference type="PharmGKB" id="PA26360"/>
<dbReference type="VEuPathDB" id="HostDB:ENSG00000105352"/>
<dbReference type="eggNOG" id="ENOG502S42Z">
    <property type="taxonomic scope" value="Eukaryota"/>
</dbReference>
<dbReference type="GeneTree" id="ENSGT01100000263479"/>
<dbReference type="HOGENOM" id="CLU_024555_4_2_1"/>
<dbReference type="InParanoid" id="O75871"/>
<dbReference type="OMA" id="WYRKSTD"/>
<dbReference type="OrthoDB" id="6353782at2759"/>
<dbReference type="PAN-GO" id="O75871">
    <property type="GO annotations" value="5 GO annotations based on evolutionary models"/>
</dbReference>
<dbReference type="PhylomeDB" id="O75871"/>
<dbReference type="TreeFam" id="TF336859"/>
<dbReference type="PathwayCommons" id="O75871"/>
<dbReference type="BioGRID-ORCS" id="1089">
    <property type="hits" value="14 hits in 1138 CRISPR screens"/>
</dbReference>
<dbReference type="GenomeRNAi" id="1089"/>
<dbReference type="Pharos" id="O75871">
    <property type="development level" value="Tbio"/>
</dbReference>
<dbReference type="PRO" id="PR:O75871"/>
<dbReference type="Proteomes" id="UP000005640">
    <property type="component" value="Chromosome 19"/>
</dbReference>
<dbReference type="RNAct" id="O75871">
    <property type="molecule type" value="protein"/>
</dbReference>
<dbReference type="Bgee" id="ENSG00000105352">
    <property type="expression patterns" value="Expressed in blood and 93 other cell types or tissues"/>
</dbReference>
<dbReference type="ExpressionAtlas" id="O75871">
    <property type="expression patterns" value="baseline and differential"/>
</dbReference>
<dbReference type="GO" id="GO:0009986">
    <property type="term" value="C:cell surface"/>
    <property type="evidence" value="ECO:0000318"/>
    <property type="project" value="GO_Central"/>
</dbReference>
<dbReference type="GO" id="GO:0016020">
    <property type="term" value="C:membrane"/>
    <property type="evidence" value="ECO:0000304"/>
    <property type="project" value="ProtInc"/>
</dbReference>
<dbReference type="GO" id="GO:0005886">
    <property type="term" value="C:plasma membrane"/>
    <property type="evidence" value="ECO:0000318"/>
    <property type="project" value="GO_Central"/>
</dbReference>
<dbReference type="GO" id="GO:1990782">
    <property type="term" value="F:protein tyrosine kinase binding"/>
    <property type="evidence" value="ECO:0000318"/>
    <property type="project" value="GO_Central"/>
</dbReference>
<dbReference type="GO" id="GO:0006909">
    <property type="term" value="P:phagocytosis"/>
    <property type="evidence" value="ECO:0000314"/>
    <property type="project" value="UniProtKB"/>
</dbReference>
<dbReference type="GO" id="GO:0002682">
    <property type="term" value="P:regulation of immune system process"/>
    <property type="evidence" value="ECO:0000318"/>
    <property type="project" value="GO_Central"/>
</dbReference>
<dbReference type="GO" id="GO:0007165">
    <property type="term" value="P:signal transduction"/>
    <property type="evidence" value="ECO:0000318"/>
    <property type="project" value="GO_Central"/>
</dbReference>
<dbReference type="CDD" id="cd05774">
    <property type="entry name" value="IgV_CEACAM_D1"/>
    <property type="match status" value="1"/>
</dbReference>
<dbReference type="FunFam" id="2.60.40.10:FF:000340">
    <property type="entry name" value="Carcinoembryonic antigen-related cell adhesion molecule 1"/>
    <property type="match status" value="1"/>
</dbReference>
<dbReference type="Gene3D" id="2.60.40.10">
    <property type="entry name" value="Immunoglobulins"/>
    <property type="match status" value="1"/>
</dbReference>
<dbReference type="InterPro" id="IPR050831">
    <property type="entry name" value="CEA_cell_adhesion"/>
</dbReference>
<dbReference type="InterPro" id="IPR007110">
    <property type="entry name" value="Ig-like_dom"/>
</dbReference>
<dbReference type="InterPro" id="IPR036179">
    <property type="entry name" value="Ig-like_dom_sf"/>
</dbReference>
<dbReference type="InterPro" id="IPR013783">
    <property type="entry name" value="Ig-like_fold"/>
</dbReference>
<dbReference type="InterPro" id="IPR013106">
    <property type="entry name" value="Ig_V-set"/>
</dbReference>
<dbReference type="PANTHER" id="PTHR44427">
    <property type="entry name" value="CARCINOEMBRYONIC ANTIGEN-RELATED CELL ADHESION MOLECULE 19"/>
    <property type="match status" value="1"/>
</dbReference>
<dbReference type="PANTHER" id="PTHR44427:SF8">
    <property type="entry name" value="CARCINOEMBRYONIC ANTIGEN-RELATED CELL ADHESION MOLECULE 4"/>
    <property type="match status" value="1"/>
</dbReference>
<dbReference type="Pfam" id="PF07686">
    <property type="entry name" value="V-set"/>
    <property type="match status" value="1"/>
</dbReference>
<dbReference type="SUPFAM" id="SSF48726">
    <property type="entry name" value="Immunoglobulin"/>
    <property type="match status" value="1"/>
</dbReference>
<dbReference type="PROSITE" id="PS50835">
    <property type="entry name" value="IG_LIKE"/>
    <property type="match status" value="1"/>
</dbReference>
<evidence type="ECO:0000255" key="1"/>
<evidence type="ECO:0000256" key="2">
    <source>
        <dbReference type="SAM" id="MobiDB-lite"/>
    </source>
</evidence>
<evidence type="ECO:0000269" key="3">
    <source>
    </source>
</evidence>
<evidence type="ECO:0000269" key="4">
    <source>
    </source>
</evidence>
<evidence type="ECO:0000305" key="5"/>
<evidence type="ECO:0000305" key="6">
    <source>
    </source>
</evidence>
<evidence type="ECO:0000312" key="7">
    <source>
        <dbReference type="HGNC" id="HGNC:1816"/>
    </source>
</evidence>
<organism>
    <name type="scientific">Homo sapiens</name>
    <name type="common">Human</name>
    <dbReference type="NCBI Taxonomy" id="9606"/>
    <lineage>
        <taxon>Eukaryota</taxon>
        <taxon>Metazoa</taxon>
        <taxon>Chordata</taxon>
        <taxon>Craniata</taxon>
        <taxon>Vertebrata</taxon>
        <taxon>Euteleostomi</taxon>
        <taxon>Mammalia</taxon>
        <taxon>Eutheria</taxon>
        <taxon>Euarchontoglires</taxon>
        <taxon>Primates</taxon>
        <taxon>Haplorrhini</taxon>
        <taxon>Catarrhini</taxon>
        <taxon>Hominidae</taxon>
        <taxon>Homo</taxon>
    </lineage>
</organism>
<sequence length="244" mass="25909">MGPPSAAPRGGHRPWQGLLITASLLTFWHPPTTVQFTIEALPSSAAEGKDVLLLACNISETIQAYYWHKGKTAEGSPLIAGYITDIQANIPGAAYSGRETVYPNGSLLFQNITLEDAGSYTLRTINASYDSDQATGQLHVHQNNVPGLPVGAVAGIVTGVLVGVALVAALVCFLLLSRTGRASIQRDLREQPPPASTPGHGPSHRSTFSAPLPSPRTATPIYEELLYSDANIYCQIDHKADVVS</sequence>